<accession>P18575</accession>
<feature type="signal peptide" evidence="1">
    <location>
        <begin position="1"/>
        <end position="18"/>
    </location>
</feature>
<feature type="chain" id="PRO_0000031593" description="Serum amyloid A-1 protein">
    <location>
        <begin position="19"/>
        <end position="129"/>
    </location>
</feature>
<feature type="region of interest" description="Important for amyloid formation" evidence="1">
    <location>
        <begin position="19"/>
        <end position="44"/>
    </location>
</feature>
<feature type="region of interest" description="Disordered" evidence="2">
    <location>
        <begin position="92"/>
        <end position="129"/>
    </location>
</feature>
<keyword id="KW-0011">Acute phase</keyword>
<keyword id="KW-0034">Amyloid</keyword>
<keyword id="KW-0345">HDL</keyword>
<keyword id="KW-0358">Heparin-binding</keyword>
<keyword id="KW-1185">Reference proteome</keyword>
<keyword id="KW-0964">Secreted</keyword>
<keyword id="KW-0732">Signal</keyword>
<proteinExistence type="evidence at transcript level"/>
<comment type="function">
    <text evidence="1">Major acute phase protein.</text>
</comment>
<comment type="subunit">
    <text evidence="1">Homohexamer; dimer of trimers. Can form amyloid fibrils after partial proteolysis; the native, undenatured protein does not form amyloid fibrils (in vitro). Apolipoprotein of the HDL complex. Binds to heparin (By similarity).</text>
</comment>
<comment type="subcellular location">
    <subcellularLocation>
        <location evidence="1">Secreted</location>
    </subcellularLocation>
</comment>
<comment type="tissue specificity">
    <text evidence="3">Detected in liver.</text>
</comment>
<comment type="induction">
    <text evidence="3">By bacterial lipopolysaccharide.</text>
</comment>
<comment type="disease">
    <text>Reactive, secondary amyloidosis is characterized by the extracellular accumulation in various tissues of the SAA protein. These deposits are highly insoluble and resistant to proteolysis; they disrupt tissue structure and compromise function.</text>
</comment>
<comment type="miscellaneous">
    <text>SAA2 is more amyloidogenic than SAA1.</text>
</comment>
<comment type="similarity">
    <text evidence="4">Belongs to the SAA family.</text>
</comment>
<protein>
    <recommendedName>
        <fullName>Serum amyloid A-1 protein</fullName>
    </recommendedName>
</protein>
<sequence>MKLFTGLIFCSLVLGVSSQWYSFIGEAAQGAWDMYRAYSDMIEAKYKNSDKYFHARGNYDAAQRGPGGAWAAKVISDARERSQRITDLIKYGDSGHGVEDSKADQAANEWGRSGKDPNHFRPPGLPDKY</sequence>
<dbReference type="EMBL" id="M34953">
    <property type="protein sequence ID" value="AAA30968.1"/>
    <property type="molecule type" value="mRNA"/>
</dbReference>
<dbReference type="PIR" id="A36451">
    <property type="entry name" value="A36451"/>
</dbReference>
<dbReference type="SMR" id="P18575"/>
<dbReference type="Ensembl" id="ENSNVIT00000028418.1">
    <property type="protein sequence ID" value="ENSNVIP00000024492.1"/>
    <property type="gene ID" value="ENSNVIG00000018957.1"/>
</dbReference>
<dbReference type="GeneTree" id="ENSGT00390000004737"/>
<dbReference type="Proteomes" id="UP000694425">
    <property type="component" value="Unplaced"/>
</dbReference>
<dbReference type="GO" id="GO:0034364">
    <property type="term" value="C:high-density lipoprotein particle"/>
    <property type="evidence" value="ECO:0007669"/>
    <property type="project" value="UniProtKB-KW"/>
</dbReference>
<dbReference type="GO" id="GO:0008201">
    <property type="term" value="F:heparin binding"/>
    <property type="evidence" value="ECO:0007669"/>
    <property type="project" value="UniProtKB-KW"/>
</dbReference>
<dbReference type="GO" id="GO:0006953">
    <property type="term" value="P:acute-phase response"/>
    <property type="evidence" value="ECO:0007669"/>
    <property type="project" value="UniProtKB-KW"/>
</dbReference>
<dbReference type="FunFam" id="1.10.132.110:FF:000001">
    <property type="entry name" value="Serum amyloid A protein"/>
    <property type="match status" value="1"/>
</dbReference>
<dbReference type="Gene3D" id="1.10.132.110">
    <property type="entry name" value="Serum amyloid A protein"/>
    <property type="match status" value="1"/>
</dbReference>
<dbReference type="InterPro" id="IPR000096">
    <property type="entry name" value="Serum_amyloid_A"/>
</dbReference>
<dbReference type="InterPro" id="IPR052464">
    <property type="entry name" value="Synovial_Prolif_Regulator"/>
</dbReference>
<dbReference type="PANTHER" id="PTHR23424">
    <property type="entry name" value="SERUM AMYLOID A"/>
    <property type="match status" value="1"/>
</dbReference>
<dbReference type="PANTHER" id="PTHR23424:SF29">
    <property type="entry name" value="SERUM AMYLOID A PROTEIN"/>
    <property type="match status" value="1"/>
</dbReference>
<dbReference type="Pfam" id="PF00277">
    <property type="entry name" value="SAA"/>
    <property type="match status" value="1"/>
</dbReference>
<dbReference type="PIRSF" id="PIRSF002472">
    <property type="entry name" value="Serum_amyloid_A"/>
    <property type="match status" value="1"/>
</dbReference>
<dbReference type="PRINTS" id="PR00306">
    <property type="entry name" value="SERUMAMYLOID"/>
</dbReference>
<dbReference type="SMART" id="SM00197">
    <property type="entry name" value="SAA"/>
    <property type="match status" value="1"/>
</dbReference>
<dbReference type="PROSITE" id="PS00992">
    <property type="entry name" value="SAA"/>
    <property type="match status" value="1"/>
</dbReference>
<reference key="1">
    <citation type="journal article" date="1990" name="J. Biol. Chem.">
        <title>Mink serum amyloid A protein. Expression and primary structure based on cDNA sequences.</title>
        <authorList>
            <person name="Marhaug G."/>
            <person name="Husby G."/>
            <person name="Dowton S.B."/>
        </authorList>
    </citation>
    <scope>NUCLEOTIDE SEQUENCE [MRNA]</scope>
    <scope>TISSUE SPECIFICITY</scope>
    <scope>INDUCTION BY LIPOPOLYSACCHARIDE</scope>
    <source>
        <tissue>Liver</tissue>
    </source>
</reference>
<evidence type="ECO:0000250" key="1"/>
<evidence type="ECO:0000256" key="2">
    <source>
        <dbReference type="SAM" id="MobiDB-lite"/>
    </source>
</evidence>
<evidence type="ECO:0000269" key="3">
    <source>
    </source>
</evidence>
<evidence type="ECO:0000305" key="4"/>
<name>SAA1_NEOVI</name>
<gene>
    <name type="primary">SAA1</name>
</gene>
<organism>
    <name type="scientific">Neovison vison</name>
    <name type="common">American mink</name>
    <name type="synonym">Mustela vison</name>
    <dbReference type="NCBI Taxonomy" id="452646"/>
    <lineage>
        <taxon>Eukaryota</taxon>
        <taxon>Metazoa</taxon>
        <taxon>Chordata</taxon>
        <taxon>Craniata</taxon>
        <taxon>Vertebrata</taxon>
        <taxon>Euteleostomi</taxon>
        <taxon>Mammalia</taxon>
        <taxon>Eutheria</taxon>
        <taxon>Laurasiatheria</taxon>
        <taxon>Carnivora</taxon>
        <taxon>Caniformia</taxon>
        <taxon>Musteloidea</taxon>
        <taxon>Mustelidae</taxon>
        <taxon>Mustelinae</taxon>
        <taxon>Neogale</taxon>
    </lineage>
</organism>